<feature type="chain" id="PRO_1000018325" description="Tryptophan synthase beta chain">
    <location>
        <begin position="1"/>
        <end position="408"/>
    </location>
</feature>
<feature type="modified residue" description="N6-(pyridoxal phosphate)lysine" evidence="1">
    <location>
        <position position="90"/>
    </location>
</feature>
<dbReference type="EC" id="4.2.1.20" evidence="1"/>
<dbReference type="EMBL" id="CP000002">
    <property type="protein sequence ID" value="AAU23925.1"/>
    <property type="molecule type" value="Genomic_DNA"/>
</dbReference>
<dbReference type="EMBL" id="AE017333">
    <property type="protein sequence ID" value="AAU41279.1"/>
    <property type="molecule type" value="Genomic_DNA"/>
</dbReference>
<dbReference type="RefSeq" id="WP_003182974.1">
    <property type="nucleotide sequence ID" value="NC_006322.1"/>
</dbReference>
<dbReference type="SMR" id="Q65I35"/>
<dbReference type="STRING" id="279010.BL02771"/>
<dbReference type="GeneID" id="92861001"/>
<dbReference type="KEGG" id="bld:BLi02399"/>
<dbReference type="KEGG" id="bli:BL02771"/>
<dbReference type="eggNOG" id="COG0133">
    <property type="taxonomic scope" value="Bacteria"/>
</dbReference>
<dbReference type="HOGENOM" id="CLU_016734_3_1_9"/>
<dbReference type="UniPathway" id="UPA00035">
    <property type="reaction ID" value="UER00044"/>
</dbReference>
<dbReference type="Proteomes" id="UP000000606">
    <property type="component" value="Chromosome"/>
</dbReference>
<dbReference type="Bgee" id="BL02771">
    <property type="expression patterns" value="Expressed in egg cell and 12 other cell types or tissues"/>
</dbReference>
<dbReference type="GO" id="GO:0005737">
    <property type="term" value="C:cytoplasm"/>
    <property type="evidence" value="ECO:0007669"/>
    <property type="project" value="TreeGrafter"/>
</dbReference>
<dbReference type="GO" id="GO:0004834">
    <property type="term" value="F:tryptophan synthase activity"/>
    <property type="evidence" value="ECO:0007669"/>
    <property type="project" value="UniProtKB-UniRule"/>
</dbReference>
<dbReference type="CDD" id="cd06446">
    <property type="entry name" value="Trp-synth_B"/>
    <property type="match status" value="1"/>
</dbReference>
<dbReference type="FunFam" id="3.40.50.1100:FF:000001">
    <property type="entry name" value="Tryptophan synthase beta chain"/>
    <property type="match status" value="1"/>
</dbReference>
<dbReference type="FunFam" id="3.40.50.1100:FF:000004">
    <property type="entry name" value="Tryptophan synthase beta chain"/>
    <property type="match status" value="1"/>
</dbReference>
<dbReference type="Gene3D" id="3.40.50.1100">
    <property type="match status" value="2"/>
</dbReference>
<dbReference type="HAMAP" id="MF_00133">
    <property type="entry name" value="Trp_synth_beta"/>
    <property type="match status" value="1"/>
</dbReference>
<dbReference type="InterPro" id="IPR006653">
    <property type="entry name" value="Trp_synth_b_CS"/>
</dbReference>
<dbReference type="InterPro" id="IPR006654">
    <property type="entry name" value="Trp_synth_beta"/>
</dbReference>
<dbReference type="InterPro" id="IPR023026">
    <property type="entry name" value="Trp_synth_beta/beta-like"/>
</dbReference>
<dbReference type="InterPro" id="IPR001926">
    <property type="entry name" value="TrpB-like_PALP"/>
</dbReference>
<dbReference type="InterPro" id="IPR036052">
    <property type="entry name" value="TrpB-like_PALP_sf"/>
</dbReference>
<dbReference type="NCBIfam" id="TIGR00263">
    <property type="entry name" value="trpB"/>
    <property type="match status" value="1"/>
</dbReference>
<dbReference type="PANTHER" id="PTHR48077:SF3">
    <property type="entry name" value="TRYPTOPHAN SYNTHASE"/>
    <property type="match status" value="1"/>
</dbReference>
<dbReference type="PANTHER" id="PTHR48077">
    <property type="entry name" value="TRYPTOPHAN SYNTHASE-RELATED"/>
    <property type="match status" value="1"/>
</dbReference>
<dbReference type="Pfam" id="PF00291">
    <property type="entry name" value="PALP"/>
    <property type="match status" value="1"/>
</dbReference>
<dbReference type="PIRSF" id="PIRSF001413">
    <property type="entry name" value="Trp_syn_beta"/>
    <property type="match status" value="1"/>
</dbReference>
<dbReference type="SUPFAM" id="SSF53686">
    <property type="entry name" value="Tryptophan synthase beta subunit-like PLP-dependent enzymes"/>
    <property type="match status" value="1"/>
</dbReference>
<dbReference type="PROSITE" id="PS00168">
    <property type="entry name" value="TRP_SYNTHASE_BETA"/>
    <property type="match status" value="1"/>
</dbReference>
<protein>
    <recommendedName>
        <fullName evidence="1">Tryptophan synthase beta chain</fullName>
        <ecNumber evidence="1">4.2.1.20</ecNumber>
    </recommendedName>
</protein>
<accession>Q65I35</accession>
<accession>Q62TI4</accession>
<comment type="function">
    <text evidence="1">The beta subunit is responsible for the synthesis of L-tryptophan from indole and L-serine.</text>
</comment>
<comment type="catalytic activity">
    <reaction evidence="1">
        <text>(1S,2R)-1-C-(indol-3-yl)glycerol 3-phosphate + L-serine = D-glyceraldehyde 3-phosphate + L-tryptophan + H2O</text>
        <dbReference type="Rhea" id="RHEA:10532"/>
        <dbReference type="ChEBI" id="CHEBI:15377"/>
        <dbReference type="ChEBI" id="CHEBI:33384"/>
        <dbReference type="ChEBI" id="CHEBI:57912"/>
        <dbReference type="ChEBI" id="CHEBI:58866"/>
        <dbReference type="ChEBI" id="CHEBI:59776"/>
        <dbReference type="EC" id="4.2.1.20"/>
    </reaction>
</comment>
<comment type="cofactor">
    <cofactor evidence="1">
        <name>pyridoxal 5'-phosphate</name>
        <dbReference type="ChEBI" id="CHEBI:597326"/>
    </cofactor>
</comment>
<comment type="pathway">
    <text evidence="1">Amino-acid biosynthesis; L-tryptophan biosynthesis; L-tryptophan from chorismate: step 5/5.</text>
</comment>
<comment type="subunit">
    <text evidence="1">Tetramer of two alpha and two beta chains.</text>
</comment>
<comment type="similarity">
    <text evidence="1">Belongs to the TrpB family.</text>
</comment>
<keyword id="KW-0028">Amino-acid biosynthesis</keyword>
<keyword id="KW-0057">Aromatic amino acid biosynthesis</keyword>
<keyword id="KW-0456">Lyase</keyword>
<keyword id="KW-0663">Pyridoxal phosphate</keyword>
<keyword id="KW-1185">Reference proteome</keyword>
<keyword id="KW-0822">Tryptophan biosynthesis</keyword>
<reference key="1">
    <citation type="journal article" date="2004" name="J. Mol. Microbiol. Biotechnol.">
        <title>The complete genome sequence of Bacillus licheniformis DSM13, an organism with great industrial potential.</title>
        <authorList>
            <person name="Veith B."/>
            <person name="Herzberg C."/>
            <person name="Steckel S."/>
            <person name="Feesche J."/>
            <person name="Maurer K.H."/>
            <person name="Ehrenreich P."/>
            <person name="Baeumer S."/>
            <person name="Henne A."/>
            <person name="Liesegang H."/>
            <person name="Merkl R."/>
            <person name="Ehrenreich A."/>
            <person name="Gottschalk G."/>
        </authorList>
    </citation>
    <scope>NUCLEOTIDE SEQUENCE [LARGE SCALE GENOMIC DNA]</scope>
    <source>
        <strain>ATCC 14580 / DSM 13 / JCM 2505 / CCUG 7422 / NBRC 12200 / NCIMB 9375 / NCTC 10341 / NRRL NRS-1264 / Gibson 46</strain>
    </source>
</reference>
<reference key="2">
    <citation type="journal article" date="2004" name="Genome Biol.">
        <title>Complete genome sequence of the industrial bacterium Bacillus licheniformis and comparisons with closely related Bacillus species.</title>
        <authorList>
            <person name="Rey M.W."/>
            <person name="Ramaiya P."/>
            <person name="Nelson B.A."/>
            <person name="Brody-Karpin S.D."/>
            <person name="Zaretsky E.J."/>
            <person name="Tang M."/>
            <person name="Lopez de Leon A."/>
            <person name="Xiang H."/>
            <person name="Gusti V."/>
            <person name="Clausen I.G."/>
            <person name="Olsen P.B."/>
            <person name="Rasmussen M.D."/>
            <person name="Andersen J.T."/>
            <person name="Joergensen P.L."/>
            <person name="Larsen T.S."/>
            <person name="Sorokin A."/>
            <person name="Bolotin A."/>
            <person name="Lapidus A."/>
            <person name="Galleron N."/>
            <person name="Ehrlich S.D."/>
            <person name="Berka R.M."/>
        </authorList>
    </citation>
    <scope>NUCLEOTIDE SEQUENCE [LARGE SCALE GENOMIC DNA]</scope>
    <source>
        <strain>ATCC 14580 / DSM 13 / JCM 2505 / CCUG 7422 / NBRC 12200 / NCIMB 9375 / NCTC 10341 / NRRL NRS-1264 / Gibson 46</strain>
    </source>
</reference>
<proteinExistence type="inferred from homology"/>
<name>TRPB_BACLD</name>
<organism>
    <name type="scientific">Bacillus licheniformis (strain ATCC 14580 / DSM 13 / JCM 2505 / CCUG 7422 / NBRC 12200 / NCIMB 9375 / NCTC 10341 / NRRL NRS-1264 / Gibson 46)</name>
    <dbReference type="NCBI Taxonomy" id="279010"/>
    <lineage>
        <taxon>Bacteria</taxon>
        <taxon>Bacillati</taxon>
        <taxon>Bacillota</taxon>
        <taxon>Bacilli</taxon>
        <taxon>Bacillales</taxon>
        <taxon>Bacillaceae</taxon>
        <taxon>Bacillus</taxon>
    </lineage>
</organism>
<gene>
    <name evidence="1" type="primary">trpB</name>
    <name type="ordered locus">BLi02399</name>
    <name type="ordered locus">BL02771</name>
</gene>
<evidence type="ECO:0000255" key="1">
    <source>
        <dbReference type="HAMAP-Rule" id="MF_00133"/>
    </source>
</evidence>
<sequence>MYSYPNEQGRFGDFGGKFVPETLMQPLEEIEKAFLELKDDPSFQKDYQKLLNDYSGRPTALTFADQLTKQLGGAKIYLKREDLNHTGAHKINNALGQALLAKKMGKTKLIAETGAGQHGVAAATVAAKFGLSCIVFMGEEDVARQSLNVFRMKLLGAEVVPVSSGNGTLKDATNEAIRYWVQHCQDHFYMIGSVVGPHPYPYIVREFQRMIGEEAKAQFYQLEQSLPDKVVACVGGGSNAIGMFSAFIEETVELIGVEAAGKGVDTPLHAATITKGTKGVIHGSLTYLIQDEYGQIIEPYSISAGLDYPGVGPEHAHLHQTGRVTYESVTDDEAVSALRLLTETEGILPAIESAHALAKAFEIAKELPREKSVLVCLSGRGDKDVHTLMKVLEEEVNQDVQSEKTAVR</sequence>